<protein>
    <recommendedName>
        <fullName>Selenocysteine-specific elongation factor</fullName>
    </recommendedName>
    <alternativeName>
        <fullName>SelB translation factor</fullName>
    </alternativeName>
</protein>
<organism>
    <name type="scientific">Escherichia coli (strain K12)</name>
    <dbReference type="NCBI Taxonomy" id="83333"/>
    <lineage>
        <taxon>Bacteria</taxon>
        <taxon>Pseudomonadati</taxon>
        <taxon>Pseudomonadota</taxon>
        <taxon>Gammaproteobacteria</taxon>
        <taxon>Enterobacterales</taxon>
        <taxon>Enterobacteriaceae</taxon>
        <taxon>Escherichia</taxon>
    </lineage>
</organism>
<reference key="1">
    <citation type="journal article" date="1989" name="Nature">
        <title>Identification of a novel translation factor necessary for the incorporation of selenocysteine into protein.</title>
        <authorList>
            <person name="Forchhammer K."/>
            <person name="Leinfelder W."/>
            <person name="Boeck A."/>
        </authorList>
    </citation>
    <scope>NUCLEOTIDE SEQUENCE [GENOMIC DNA]</scope>
    <source>
        <strain>K12 / MC4100 / ATCC 35695 / DSM 6574</strain>
    </source>
</reference>
<reference key="2">
    <citation type="journal article" date="1994" name="Nucleic Acids Res.">
        <title>Analysis of the Escherichia coli genome. V. DNA sequence of the region from 76.0 to 81.5 minutes.</title>
        <authorList>
            <person name="Sofia H.J."/>
            <person name="Burland V."/>
            <person name="Daniels D.L."/>
            <person name="Plunkett G. III"/>
            <person name="Blattner F.R."/>
        </authorList>
    </citation>
    <scope>NUCLEOTIDE SEQUENCE [LARGE SCALE GENOMIC DNA]</scope>
    <source>
        <strain>K12 / MG1655 / ATCC 47076</strain>
    </source>
</reference>
<reference key="3">
    <citation type="journal article" date="1997" name="Science">
        <title>The complete genome sequence of Escherichia coli K-12.</title>
        <authorList>
            <person name="Blattner F.R."/>
            <person name="Plunkett G. III"/>
            <person name="Bloch C.A."/>
            <person name="Perna N.T."/>
            <person name="Burland V."/>
            <person name="Riley M."/>
            <person name="Collado-Vides J."/>
            <person name="Glasner J.D."/>
            <person name="Rode C.K."/>
            <person name="Mayhew G.F."/>
            <person name="Gregor J."/>
            <person name="Davis N.W."/>
            <person name="Kirkpatrick H.A."/>
            <person name="Goeden M.A."/>
            <person name="Rose D.J."/>
            <person name="Mau B."/>
            <person name="Shao Y."/>
        </authorList>
    </citation>
    <scope>NUCLEOTIDE SEQUENCE [LARGE SCALE GENOMIC DNA]</scope>
    <scope>SEQUENCE REVISION TO C-TERMINUS</scope>
    <source>
        <strain>K12 / MG1655 / ATCC 47076</strain>
    </source>
</reference>
<reference key="4">
    <citation type="journal article" date="2006" name="Mol. Syst. Biol.">
        <title>Highly accurate genome sequences of Escherichia coli K-12 strains MG1655 and W3110.</title>
        <authorList>
            <person name="Hayashi K."/>
            <person name="Morooka N."/>
            <person name="Yamamoto Y."/>
            <person name="Fujita K."/>
            <person name="Isono K."/>
            <person name="Choi S."/>
            <person name="Ohtsubo E."/>
            <person name="Baba T."/>
            <person name="Wanner B.L."/>
            <person name="Mori H."/>
            <person name="Horiuchi T."/>
        </authorList>
    </citation>
    <scope>NUCLEOTIDE SEQUENCE [LARGE SCALE GENOMIC DNA]</scope>
    <source>
        <strain>K12 / W3110 / ATCC 27325 / DSM 5911</strain>
    </source>
</reference>
<reference key="5">
    <citation type="journal article" date="1990" name="J. Biol. Chem.">
        <title>Purification and biochemical characterization of SELB, a translation factor involved in selenoprotein synthesis.</title>
        <authorList>
            <person name="Forchhammer K."/>
            <person name="Rucknagel K.-P."/>
            <person name="Bock A."/>
        </authorList>
    </citation>
    <scope>CHARACTERIZATION</scope>
</reference>
<reference key="6">
    <citation type="journal article" date="1997" name="Electrophoresis">
        <title>Escherichia coli proteome analysis using the gene-protein database.</title>
        <authorList>
            <person name="VanBogelen R.A."/>
            <person name="Abshire K.Z."/>
            <person name="Moldover B."/>
            <person name="Olson E.R."/>
            <person name="Neidhardt F.C."/>
        </authorList>
    </citation>
    <scope>IDENTIFICATION BY 2D-GEL</scope>
</reference>
<feature type="chain" id="PRO_0000091474" description="Selenocysteine-specific elongation factor">
    <location>
        <begin position="1"/>
        <end position="614"/>
    </location>
</feature>
<feature type="domain" description="tr-type G" evidence="2">
    <location>
        <begin position="1"/>
        <end position="173"/>
    </location>
</feature>
<feature type="region of interest" description="G1" evidence="2">
    <location>
        <begin position="7"/>
        <end position="14"/>
    </location>
</feature>
<feature type="region of interest" description="G2" evidence="2">
    <location>
        <begin position="35"/>
        <end position="39"/>
    </location>
</feature>
<feature type="region of interest" description="G3" evidence="2">
    <location>
        <begin position="57"/>
        <end position="60"/>
    </location>
</feature>
<feature type="region of interest" description="G4" evidence="2">
    <location>
        <begin position="112"/>
        <end position="115"/>
    </location>
</feature>
<feature type="region of interest" description="G5" evidence="2">
    <location>
        <begin position="147"/>
        <end position="149"/>
    </location>
</feature>
<feature type="binding site" evidence="1">
    <location>
        <begin position="7"/>
        <end position="14"/>
    </location>
    <ligand>
        <name>GTP</name>
        <dbReference type="ChEBI" id="CHEBI:37565"/>
    </ligand>
</feature>
<feature type="binding site" evidence="1">
    <location>
        <begin position="57"/>
        <end position="61"/>
    </location>
    <ligand>
        <name>GTP</name>
        <dbReference type="ChEBI" id="CHEBI:37565"/>
    </ligand>
</feature>
<feature type="binding site" evidence="1">
    <location>
        <begin position="112"/>
        <end position="115"/>
    </location>
    <ligand>
        <name>GTP</name>
        <dbReference type="ChEBI" id="CHEBI:37565"/>
    </ligand>
</feature>
<feature type="helix" evidence="3">
    <location>
        <begin position="489"/>
        <end position="498"/>
    </location>
</feature>
<feature type="helix" evidence="3">
    <location>
        <begin position="499"/>
        <end position="501"/>
    </location>
</feature>
<feature type="strand" evidence="3">
    <location>
        <begin position="503"/>
        <end position="505"/>
    </location>
</feature>
<feature type="helix" evidence="3">
    <location>
        <begin position="509"/>
        <end position="515"/>
    </location>
</feature>
<feature type="helix" evidence="3">
    <location>
        <begin position="520"/>
        <end position="532"/>
    </location>
</feature>
<feature type="strand" evidence="3">
    <location>
        <begin position="535"/>
        <end position="540"/>
    </location>
</feature>
<feature type="strand" evidence="3">
    <location>
        <begin position="543"/>
        <end position="546"/>
    </location>
</feature>
<feature type="helix" evidence="3">
    <location>
        <begin position="547"/>
        <end position="564"/>
    </location>
</feature>
<feature type="strand" evidence="3">
    <location>
        <begin position="565"/>
        <end position="568"/>
    </location>
</feature>
<feature type="helix" evidence="3">
    <location>
        <begin position="569"/>
        <end position="576"/>
    </location>
</feature>
<feature type="helix" evidence="3">
    <location>
        <begin position="580"/>
        <end position="592"/>
    </location>
</feature>
<feature type="strand" evidence="3">
    <location>
        <begin position="595"/>
        <end position="599"/>
    </location>
</feature>
<feature type="strand" evidence="3">
    <location>
        <begin position="602"/>
        <end position="605"/>
    </location>
</feature>
<keyword id="KW-0002">3D-structure</keyword>
<keyword id="KW-0963">Cytoplasm</keyword>
<keyword id="KW-0342">GTP-binding</keyword>
<keyword id="KW-0547">Nucleotide-binding</keyword>
<keyword id="KW-0648">Protein biosynthesis</keyword>
<keyword id="KW-1185">Reference proteome</keyword>
<proteinExistence type="evidence at protein level"/>
<evidence type="ECO:0000250" key="1"/>
<evidence type="ECO:0000255" key="2">
    <source>
        <dbReference type="PROSITE-ProRule" id="PRU01059"/>
    </source>
</evidence>
<evidence type="ECO:0007829" key="3">
    <source>
        <dbReference type="PDB" id="2PJP"/>
    </source>
</evidence>
<name>SELB_ECOLI</name>
<comment type="function">
    <text>Translation factor necessary for the incorporation of selenocysteine into proteins. It probably replaces EF-Tu for the insertion of selenocysteine directed by the UGA codon. SelB binds GTP and GDP.</text>
</comment>
<comment type="interaction">
    <interactant intactId="EBI-551705">
        <id>P14081</id>
    </interactant>
    <interactant intactId="EBI-557952">
        <id>P23721</id>
        <label>serC</label>
    </interactant>
    <organismsDiffer>false</organismsDiffer>
    <experiments>3</experiments>
</comment>
<comment type="subcellular location">
    <subcellularLocation>
        <location>Cytoplasm</location>
    </subcellularLocation>
</comment>
<comment type="miscellaneous">
    <text>There are about 1100 copies of SelB per E.coli cell.</text>
</comment>
<comment type="similarity">
    <text evidence="2">Belongs to the TRAFAC class translation factor GTPase superfamily. Classic translation factor GTPase family. SelB subfamily.</text>
</comment>
<sequence>MIIATAGHVDHGKTTLLQAITGVNADRLPEEKKRGMTIDLGYAYWPQPDGRVPGFIDVPGHEKFLSNMLAGVGGIDHALLVVACDDGVMAQTREHLAILQLTGNPMLTVALTKADRVDEARVDEVERQVKEVLREYGFAEAKLFITAATEGRGMDALREHLLQLPEREHASQHSFRLAIDRAFTVKGAGLVVTGTALSGEVKVGDSLWLTGVNKPMRVRALHAQNQPTETANAGQRIALNIAGDAEKEQINRGDWLLADVPPEPFTRVIVELQTHTPLTQWQPLHIHHAASHVTGRVSLLEDNLAELVFDTPLWLADNDRLVLRDISARNTLAGARVVMLNPPRRGKRKPEYLQWLASLARAQSDADALSVHLERGAVNLADFAWARQLNGEGMRELLQQPGYIQAGYSLLNAPVAARWQRKILDTLATYHEQHRDEPGPGRERLRRMALPMEDEALVLLLIEKMRESGDIHSHHGWLHLPDHKAGFSEEQQAIWQKAEPLFGDEPWWVRDLAKETGTDEQAMRLTLRQAAQQGIITAIVKDRYYRNDRIVEFANMIRDLDQECGSTCAADFRDRLGVGRKLAIQILEYFDRIGFTRRRGNDHLLRDALLFPEK</sequence>
<gene>
    <name type="primary">selB</name>
    <name type="synonym">fdhA</name>
    <name type="ordered locus">b3590</name>
    <name type="ordered locus">JW3563</name>
</gene>
<accession>P14081</accession>
<accession>Q2M7Q3</accession>
<dbReference type="EMBL" id="X16644">
    <property type="protein sequence ID" value="CAA34637.1"/>
    <property type="molecule type" value="Genomic_DNA"/>
</dbReference>
<dbReference type="EMBL" id="U00039">
    <property type="protein sequence ID" value="AAB18567.1"/>
    <property type="status" value="ALT_FRAME"/>
    <property type="molecule type" value="Genomic_DNA"/>
</dbReference>
<dbReference type="EMBL" id="U00096">
    <property type="protein sequence ID" value="AAC76614.1"/>
    <property type="molecule type" value="Genomic_DNA"/>
</dbReference>
<dbReference type="EMBL" id="AP009048">
    <property type="protein sequence ID" value="BAE77703.1"/>
    <property type="molecule type" value="Genomic_DNA"/>
</dbReference>
<dbReference type="PIR" id="JV0050">
    <property type="entry name" value="EFECSB"/>
</dbReference>
<dbReference type="RefSeq" id="NP_418047.1">
    <property type="nucleotide sequence ID" value="NC_000913.3"/>
</dbReference>
<dbReference type="RefSeq" id="WP_000582468.1">
    <property type="nucleotide sequence ID" value="NZ_SSZK01000041.1"/>
</dbReference>
<dbReference type="PDB" id="2PJP">
    <property type="method" value="X-ray"/>
    <property type="resolution" value="2.30 A"/>
    <property type="chains" value="A=487-607"/>
</dbReference>
<dbReference type="PDB" id="5LZB">
    <property type="method" value="EM"/>
    <property type="resolution" value="5.30 A"/>
    <property type="chains" value="z=1-614"/>
</dbReference>
<dbReference type="PDB" id="5LZC">
    <property type="method" value="EM"/>
    <property type="resolution" value="4.80 A"/>
    <property type="chains" value="z=1-614"/>
</dbReference>
<dbReference type="PDB" id="5LZD">
    <property type="method" value="EM"/>
    <property type="resolution" value="3.40 A"/>
    <property type="chains" value="z=1-614"/>
</dbReference>
<dbReference type="PDBsum" id="2PJP"/>
<dbReference type="PDBsum" id="5LZB"/>
<dbReference type="PDBsum" id="5LZC"/>
<dbReference type="PDBsum" id="5LZD"/>
<dbReference type="EMDB" id="EMD-4122"/>
<dbReference type="EMDB" id="EMD-4123"/>
<dbReference type="EMDB" id="EMD-4124"/>
<dbReference type="SMR" id="P14081"/>
<dbReference type="BioGRID" id="4261875">
    <property type="interactions" value="16"/>
</dbReference>
<dbReference type="DIP" id="DIP-10848N"/>
<dbReference type="FunCoup" id="P14081">
    <property type="interactions" value="155"/>
</dbReference>
<dbReference type="IntAct" id="P14081">
    <property type="interactions" value="42"/>
</dbReference>
<dbReference type="STRING" id="511145.b3590"/>
<dbReference type="jPOST" id="P14081"/>
<dbReference type="PaxDb" id="511145-b3590"/>
<dbReference type="EnsemblBacteria" id="AAC76614">
    <property type="protein sequence ID" value="AAC76614"/>
    <property type="gene ID" value="b3590"/>
</dbReference>
<dbReference type="GeneID" id="948103"/>
<dbReference type="KEGG" id="ecj:JW3563"/>
<dbReference type="KEGG" id="eco:b3590"/>
<dbReference type="KEGG" id="ecoc:C3026_19465"/>
<dbReference type="PATRIC" id="fig|1411691.4.peg.3121"/>
<dbReference type="EchoBASE" id="EB0935"/>
<dbReference type="eggNOG" id="COG3276">
    <property type="taxonomic scope" value="Bacteria"/>
</dbReference>
<dbReference type="HOGENOM" id="CLU_023030_2_0_6"/>
<dbReference type="InParanoid" id="P14081"/>
<dbReference type="OMA" id="HYAMLIV"/>
<dbReference type="OrthoDB" id="9803139at2"/>
<dbReference type="PhylomeDB" id="P14081"/>
<dbReference type="BioCyc" id="EcoCyc:EG10942-MONOMER"/>
<dbReference type="BioCyc" id="MetaCyc:EG10942-MONOMER"/>
<dbReference type="EvolutionaryTrace" id="P14081"/>
<dbReference type="PRO" id="PR:P14081"/>
<dbReference type="Proteomes" id="UP000000625">
    <property type="component" value="Chromosome"/>
</dbReference>
<dbReference type="GO" id="GO:0005737">
    <property type="term" value="C:cytoplasm"/>
    <property type="evidence" value="ECO:0007669"/>
    <property type="project" value="UniProtKB-SubCell"/>
</dbReference>
<dbReference type="GO" id="GO:0019003">
    <property type="term" value="F:GDP binding"/>
    <property type="evidence" value="ECO:0000314"/>
    <property type="project" value="EcoCyc"/>
</dbReference>
<dbReference type="GO" id="GO:0005525">
    <property type="term" value="F:GTP binding"/>
    <property type="evidence" value="ECO:0000314"/>
    <property type="project" value="EcoCyc"/>
</dbReference>
<dbReference type="GO" id="GO:0003924">
    <property type="term" value="F:GTPase activity"/>
    <property type="evidence" value="ECO:0000314"/>
    <property type="project" value="EcoCyc"/>
</dbReference>
<dbReference type="GO" id="GO:0035368">
    <property type="term" value="F:selenocysteine insertion sequence binding"/>
    <property type="evidence" value="ECO:0000314"/>
    <property type="project" value="EcoCyc"/>
</dbReference>
<dbReference type="GO" id="GO:0003746">
    <property type="term" value="F:translation elongation factor activity"/>
    <property type="evidence" value="ECO:0007669"/>
    <property type="project" value="InterPro"/>
</dbReference>
<dbReference type="GO" id="GO:0000049">
    <property type="term" value="F:tRNA binding"/>
    <property type="evidence" value="ECO:0000314"/>
    <property type="project" value="EcoCyc"/>
</dbReference>
<dbReference type="GO" id="GO:0001514">
    <property type="term" value="P:selenocysteine incorporation"/>
    <property type="evidence" value="ECO:0000315"/>
    <property type="project" value="EcoCyc"/>
</dbReference>
<dbReference type="GO" id="GO:0016259">
    <property type="term" value="P:selenocysteine metabolic process"/>
    <property type="evidence" value="ECO:0000315"/>
    <property type="project" value="EcoCyc"/>
</dbReference>
<dbReference type="CDD" id="cd04171">
    <property type="entry name" value="SelB"/>
    <property type="match status" value="1"/>
</dbReference>
<dbReference type="CDD" id="cd03696">
    <property type="entry name" value="SelB_II"/>
    <property type="match status" value="1"/>
</dbReference>
<dbReference type="CDD" id="cd15491">
    <property type="entry name" value="selB_III"/>
    <property type="match status" value="1"/>
</dbReference>
<dbReference type="FunFam" id="1.10.10.10:FF:000350">
    <property type="entry name" value="Selenocysteine-specific translation elongation factor"/>
    <property type="match status" value="1"/>
</dbReference>
<dbReference type="FunFam" id="2.40.30.10:FF:000080">
    <property type="entry name" value="Selenocysteine-specific translation elongation factor"/>
    <property type="match status" value="1"/>
</dbReference>
<dbReference type="FunFam" id="3.40.50.300:FF:001064">
    <property type="entry name" value="Selenocysteine-specific translation elongation factor"/>
    <property type="match status" value="1"/>
</dbReference>
<dbReference type="Gene3D" id="3.40.50.300">
    <property type="entry name" value="P-loop containing nucleotide triphosphate hydrolases"/>
    <property type="match status" value="1"/>
</dbReference>
<dbReference type="Gene3D" id="2.40.30.10">
    <property type="entry name" value="Translation factors"/>
    <property type="match status" value="1"/>
</dbReference>
<dbReference type="Gene3D" id="1.10.10.10">
    <property type="entry name" value="Winged helix-like DNA-binding domain superfamily/Winged helix DNA-binding domain"/>
    <property type="match status" value="3"/>
</dbReference>
<dbReference type="InterPro" id="IPR004161">
    <property type="entry name" value="EFTu-like_2"/>
</dbReference>
<dbReference type="InterPro" id="IPR050543">
    <property type="entry name" value="eIF2G"/>
</dbReference>
<dbReference type="InterPro" id="IPR015190">
    <property type="entry name" value="Elong_fac_SelB-wing-hlx_typ-2"/>
</dbReference>
<dbReference type="InterPro" id="IPR031157">
    <property type="entry name" value="G_TR_CS"/>
</dbReference>
<dbReference type="InterPro" id="IPR027417">
    <property type="entry name" value="P-loop_NTPase"/>
</dbReference>
<dbReference type="InterPro" id="IPR048931">
    <property type="entry name" value="SelB_WH_3rd"/>
</dbReference>
<dbReference type="InterPro" id="IPR015191">
    <property type="entry name" value="SelB_WHD4"/>
</dbReference>
<dbReference type="InterPro" id="IPR048649">
    <property type="entry name" value="SelB_WND1"/>
</dbReference>
<dbReference type="InterPro" id="IPR000795">
    <property type="entry name" value="T_Tr_GTP-bd_dom"/>
</dbReference>
<dbReference type="InterPro" id="IPR009000">
    <property type="entry name" value="Transl_B-barrel_sf"/>
</dbReference>
<dbReference type="InterPro" id="IPR009001">
    <property type="entry name" value="Transl_elong_EF1A/Init_IF2_C"/>
</dbReference>
<dbReference type="InterPro" id="IPR004535">
    <property type="entry name" value="Transl_elong_SelB"/>
</dbReference>
<dbReference type="InterPro" id="IPR036388">
    <property type="entry name" value="WH-like_DNA-bd_sf"/>
</dbReference>
<dbReference type="InterPro" id="IPR036390">
    <property type="entry name" value="WH_DNA-bd_sf"/>
</dbReference>
<dbReference type="NCBIfam" id="TIGR00475">
    <property type="entry name" value="selB"/>
    <property type="match status" value="1"/>
</dbReference>
<dbReference type="PANTHER" id="PTHR42854">
    <property type="entry name" value="EUKARYOTIC TRANSLATION INITIATION FACTOR 2 SUBUNIT 3 FAMILY MEMBER"/>
    <property type="match status" value="1"/>
</dbReference>
<dbReference type="PANTHER" id="PTHR42854:SF3">
    <property type="entry name" value="EUKARYOTIC TRANSLATION INITIATION FACTOR 2 SUBUNIT 3-RELATED"/>
    <property type="match status" value="1"/>
</dbReference>
<dbReference type="Pfam" id="PF25461">
    <property type="entry name" value="Beta-barrel_SelB"/>
    <property type="match status" value="1"/>
</dbReference>
<dbReference type="Pfam" id="PF00009">
    <property type="entry name" value="GTP_EFTU"/>
    <property type="match status" value="1"/>
</dbReference>
<dbReference type="Pfam" id="PF03144">
    <property type="entry name" value="GTP_EFTU_D2"/>
    <property type="match status" value="1"/>
</dbReference>
<dbReference type="Pfam" id="PF21458">
    <property type="entry name" value="SelB-wing_1_3"/>
    <property type="match status" value="1"/>
</dbReference>
<dbReference type="Pfam" id="PF09106">
    <property type="entry name" value="SelB-wing_2"/>
    <property type="match status" value="1"/>
</dbReference>
<dbReference type="Pfam" id="PF09107">
    <property type="entry name" value="SelB-wing_3"/>
    <property type="match status" value="1"/>
</dbReference>
<dbReference type="Pfam" id="PF21214">
    <property type="entry name" value="SelB_WH_2nd_bact"/>
    <property type="match status" value="1"/>
</dbReference>
<dbReference type="PRINTS" id="PR00315">
    <property type="entry name" value="ELONGATNFCT"/>
</dbReference>
<dbReference type="SUPFAM" id="SSF50465">
    <property type="entry name" value="EF-Tu/eEF-1alpha/eIF2-gamma C-terminal domain"/>
    <property type="match status" value="1"/>
</dbReference>
<dbReference type="SUPFAM" id="SSF52540">
    <property type="entry name" value="P-loop containing nucleoside triphosphate hydrolases"/>
    <property type="match status" value="1"/>
</dbReference>
<dbReference type="SUPFAM" id="SSF50447">
    <property type="entry name" value="Translation proteins"/>
    <property type="match status" value="1"/>
</dbReference>
<dbReference type="SUPFAM" id="SSF46785">
    <property type="entry name" value="Winged helix' DNA-binding domain"/>
    <property type="match status" value="3"/>
</dbReference>
<dbReference type="PROSITE" id="PS00301">
    <property type="entry name" value="G_TR_1"/>
    <property type="match status" value="1"/>
</dbReference>
<dbReference type="PROSITE" id="PS51722">
    <property type="entry name" value="G_TR_2"/>
    <property type="match status" value="1"/>
</dbReference>